<reference key="1">
    <citation type="journal article" date="2004" name="Proc. Natl. Acad. Sci. U.S.A.">
        <title>The louse-borne human pathogen Bartonella quintana is a genomic derivative of the zoonotic agent Bartonella henselae.</title>
        <authorList>
            <person name="Alsmark U.C.M."/>
            <person name="Frank A.C."/>
            <person name="Karlberg E.O."/>
            <person name="Legault B.-A."/>
            <person name="Ardell D.H."/>
            <person name="Canbaeck B."/>
            <person name="Eriksson A.-S."/>
            <person name="Naeslund A.K."/>
            <person name="Handley S.A."/>
            <person name="Huvet M."/>
            <person name="La Scola B."/>
            <person name="Holmberg M."/>
            <person name="Andersson S.G.E."/>
        </authorList>
    </citation>
    <scope>NUCLEOTIDE SEQUENCE [LARGE SCALE GENOMIC DNA]</scope>
    <source>
        <strain>Toulouse</strain>
    </source>
</reference>
<organism>
    <name type="scientific">Bartonella quintana (strain Toulouse)</name>
    <name type="common">Rochalimaea quintana</name>
    <dbReference type="NCBI Taxonomy" id="283165"/>
    <lineage>
        <taxon>Bacteria</taxon>
        <taxon>Pseudomonadati</taxon>
        <taxon>Pseudomonadota</taxon>
        <taxon>Alphaproteobacteria</taxon>
        <taxon>Hyphomicrobiales</taxon>
        <taxon>Bartonellaceae</taxon>
        <taxon>Bartonella</taxon>
    </lineage>
</organism>
<dbReference type="EMBL" id="BX897700">
    <property type="protein sequence ID" value="CAF26306.1"/>
    <property type="molecule type" value="Genomic_DNA"/>
</dbReference>
<dbReference type="RefSeq" id="WP_011179552.1">
    <property type="nucleotide sequence ID" value="NC_005955.1"/>
</dbReference>
<dbReference type="SMR" id="Q6FZC2"/>
<dbReference type="KEGG" id="bqu:BQ08230"/>
<dbReference type="eggNOG" id="COG0087">
    <property type="taxonomic scope" value="Bacteria"/>
</dbReference>
<dbReference type="HOGENOM" id="CLU_044142_2_0_5"/>
<dbReference type="OrthoDB" id="9806135at2"/>
<dbReference type="Proteomes" id="UP000000597">
    <property type="component" value="Chromosome"/>
</dbReference>
<dbReference type="GO" id="GO:0022625">
    <property type="term" value="C:cytosolic large ribosomal subunit"/>
    <property type="evidence" value="ECO:0007669"/>
    <property type="project" value="TreeGrafter"/>
</dbReference>
<dbReference type="GO" id="GO:0019843">
    <property type="term" value="F:rRNA binding"/>
    <property type="evidence" value="ECO:0007669"/>
    <property type="project" value="UniProtKB-UniRule"/>
</dbReference>
<dbReference type="GO" id="GO:0003735">
    <property type="term" value="F:structural constituent of ribosome"/>
    <property type="evidence" value="ECO:0007669"/>
    <property type="project" value="InterPro"/>
</dbReference>
<dbReference type="GO" id="GO:0006412">
    <property type="term" value="P:translation"/>
    <property type="evidence" value="ECO:0007669"/>
    <property type="project" value="UniProtKB-UniRule"/>
</dbReference>
<dbReference type="FunFam" id="2.40.30.10:FF:000004">
    <property type="entry name" value="50S ribosomal protein L3"/>
    <property type="match status" value="1"/>
</dbReference>
<dbReference type="FunFam" id="3.30.160.810:FF:000001">
    <property type="entry name" value="50S ribosomal protein L3"/>
    <property type="match status" value="1"/>
</dbReference>
<dbReference type="Gene3D" id="3.30.160.810">
    <property type="match status" value="1"/>
</dbReference>
<dbReference type="Gene3D" id="2.40.30.10">
    <property type="entry name" value="Translation factors"/>
    <property type="match status" value="1"/>
</dbReference>
<dbReference type="HAMAP" id="MF_01325_B">
    <property type="entry name" value="Ribosomal_uL3_B"/>
    <property type="match status" value="1"/>
</dbReference>
<dbReference type="InterPro" id="IPR000597">
    <property type="entry name" value="Ribosomal_uL3"/>
</dbReference>
<dbReference type="InterPro" id="IPR019927">
    <property type="entry name" value="Ribosomal_uL3_bac/org-type"/>
</dbReference>
<dbReference type="InterPro" id="IPR019926">
    <property type="entry name" value="Ribosomal_uL3_CS"/>
</dbReference>
<dbReference type="InterPro" id="IPR009000">
    <property type="entry name" value="Transl_B-barrel_sf"/>
</dbReference>
<dbReference type="NCBIfam" id="TIGR03625">
    <property type="entry name" value="L3_bact"/>
    <property type="match status" value="1"/>
</dbReference>
<dbReference type="PANTHER" id="PTHR11229">
    <property type="entry name" value="50S RIBOSOMAL PROTEIN L3"/>
    <property type="match status" value="1"/>
</dbReference>
<dbReference type="PANTHER" id="PTHR11229:SF16">
    <property type="entry name" value="LARGE RIBOSOMAL SUBUNIT PROTEIN UL3C"/>
    <property type="match status" value="1"/>
</dbReference>
<dbReference type="Pfam" id="PF00297">
    <property type="entry name" value="Ribosomal_L3"/>
    <property type="match status" value="1"/>
</dbReference>
<dbReference type="SUPFAM" id="SSF50447">
    <property type="entry name" value="Translation proteins"/>
    <property type="match status" value="1"/>
</dbReference>
<dbReference type="PROSITE" id="PS00474">
    <property type="entry name" value="RIBOSOMAL_L3"/>
    <property type="match status" value="1"/>
</dbReference>
<evidence type="ECO:0000255" key="1">
    <source>
        <dbReference type="HAMAP-Rule" id="MF_01325"/>
    </source>
</evidence>
<evidence type="ECO:0000305" key="2"/>
<sequence length="246" mass="26460">MRSGVIAQKLGMTRVYNDAGEHVPVTVLRLENCQVIAQRTIEKNGYTAVQLGVGFAKVKNTSRALRGHFAKVSVEPKAKIAEFRVSPDNLLDIGTEITAQHFVPGQRVDVTGTSIGKGFAGVMKRHNFGGHRASHGNSITHRAHGSTGQCQDPGKVFKGKKMAGHMGQVRVTTQNIEVVSTDVERGLILVRGAVSGSKGAWILVRDAVKRPLPDNVPRPAGIRQLAKEKTEMVTPVTETSEAEGAE</sequence>
<protein>
    <recommendedName>
        <fullName evidence="1">Large ribosomal subunit protein uL3</fullName>
    </recommendedName>
    <alternativeName>
        <fullName evidence="2">50S ribosomal protein L3</fullName>
    </alternativeName>
</protein>
<keyword id="KW-0488">Methylation</keyword>
<keyword id="KW-0687">Ribonucleoprotein</keyword>
<keyword id="KW-0689">Ribosomal protein</keyword>
<keyword id="KW-0694">RNA-binding</keyword>
<keyword id="KW-0699">rRNA-binding</keyword>
<gene>
    <name evidence="1" type="primary">rplC</name>
    <name type="ordered locus">BQ08230</name>
</gene>
<name>RL3_BARQU</name>
<feature type="chain" id="PRO_0000241318" description="Large ribosomal subunit protein uL3">
    <location>
        <begin position="1"/>
        <end position="246"/>
    </location>
</feature>
<feature type="modified residue" description="N5-methylglutamine" evidence="1">
    <location>
        <position position="151"/>
    </location>
</feature>
<accession>Q6FZC2</accession>
<proteinExistence type="inferred from homology"/>
<comment type="function">
    <text evidence="1">One of the primary rRNA binding proteins, it binds directly near the 3'-end of the 23S rRNA, where it nucleates assembly of the 50S subunit.</text>
</comment>
<comment type="subunit">
    <text evidence="1">Part of the 50S ribosomal subunit. Forms a cluster with proteins L14 and L19.</text>
</comment>
<comment type="PTM">
    <text evidence="1">Methylated by PrmB.</text>
</comment>
<comment type="similarity">
    <text evidence="1">Belongs to the universal ribosomal protein uL3 family.</text>
</comment>